<sequence length="153" mass="16843">MGPFSTITVSFLFCLAFWHPDQIGANPVYNAMSNADLMDFKNLLDHLEDRMPFEDEAVPPQALSEQSDEAGAALSPLPEVPPWTGEVSPAQRDGEALGRSTWEASERSALLKSKLRALLTAPRSLRRSSCFGGRIDRIGAQSGLGCNSFRYRR</sequence>
<name>ANF_RABIT</name>
<dbReference type="EMBL" id="M12046">
    <property type="protein sequence ID" value="AAA31162.1"/>
    <property type="molecule type" value="mRNA"/>
</dbReference>
<dbReference type="PIR" id="B25302">
    <property type="entry name" value="AWRB"/>
</dbReference>
<dbReference type="RefSeq" id="NP_001075731.1">
    <property type="nucleotide sequence ID" value="NM_001082262.1"/>
</dbReference>
<dbReference type="BMRB" id="P07500"/>
<dbReference type="FunCoup" id="P07500">
    <property type="interactions" value="10"/>
</dbReference>
<dbReference type="STRING" id="9986.ENSOCUP00000006321"/>
<dbReference type="PaxDb" id="9986-ENSOCUP00000006321"/>
<dbReference type="GeneID" id="100009087"/>
<dbReference type="KEGG" id="ocu:100009087"/>
<dbReference type="CTD" id="4878"/>
<dbReference type="eggNOG" id="ENOG502S9RQ">
    <property type="taxonomic scope" value="Eukaryota"/>
</dbReference>
<dbReference type="InParanoid" id="P07500"/>
<dbReference type="OrthoDB" id="8865096at2759"/>
<dbReference type="Proteomes" id="UP000001811">
    <property type="component" value="Unplaced"/>
</dbReference>
<dbReference type="GO" id="GO:0042995">
    <property type="term" value="C:cell projection"/>
    <property type="evidence" value="ECO:0007669"/>
    <property type="project" value="UniProtKB-SubCell"/>
</dbReference>
<dbReference type="GO" id="GO:0005737">
    <property type="term" value="C:cytoplasm"/>
    <property type="evidence" value="ECO:0007669"/>
    <property type="project" value="TreeGrafter"/>
</dbReference>
<dbReference type="GO" id="GO:0005615">
    <property type="term" value="C:extracellular space"/>
    <property type="evidence" value="ECO:0007669"/>
    <property type="project" value="TreeGrafter"/>
</dbReference>
<dbReference type="GO" id="GO:0043204">
    <property type="term" value="C:perikaryon"/>
    <property type="evidence" value="ECO:0007669"/>
    <property type="project" value="UniProtKB-SubCell"/>
</dbReference>
<dbReference type="GO" id="GO:0005179">
    <property type="term" value="F:hormone activity"/>
    <property type="evidence" value="ECO:0007669"/>
    <property type="project" value="UniProtKB-KW"/>
</dbReference>
<dbReference type="GO" id="GO:0051427">
    <property type="term" value="F:hormone receptor binding"/>
    <property type="evidence" value="ECO:0007669"/>
    <property type="project" value="TreeGrafter"/>
</dbReference>
<dbReference type="GO" id="GO:0006182">
    <property type="term" value="P:cGMP biosynthetic process"/>
    <property type="evidence" value="ECO:0000250"/>
    <property type="project" value="UniProtKB"/>
</dbReference>
<dbReference type="GO" id="GO:0019934">
    <property type="term" value="P:cGMP-mediated signaling"/>
    <property type="evidence" value="ECO:0007669"/>
    <property type="project" value="TreeGrafter"/>
</dbReference>
<dbReference type="GO" id="GO:0007565">
    <property type="term" value="P:female pregnancy"/>
    <property type="evidence" value="ECO:0000250"/>
    <property type="project" value="UniProtKB"/>
</dbReference>
<dbReference type="GO" id="GO:0003085">
    <property type="term" value="P:negative regulation of systemic arterial blood pressure"/>
    <property type="evidence" value="ECO:0007669"/>
    <property type="project" value="TreeGrafter"/>
</dbReference>
<dbReference type="GO" id="GO:0007218">
    <property type="term" value="P:neuropeptide signaling pathway"/>
    <property type="evidence" value="ECO:0007669"/>
    <property type="project" value="TreeGrafter"/>
</dbReference>
<dbReference type="GO" id="GO:0007168">
    <property type="term" value="P:receptor guanylyl cyclase signaling pathway"/>
    <property type="evidence" value="ECO:0000250"/>
    <property type="project" value="UniProtKB"/>
</dbReference>
<dbReference type="GO" id="GO:0008217">
    <property type="term" value="P:regulation of blood pressure"/>
    <property type="evidence" value="ECO:0000250"/>
    <property type="project" value="UniProtKB"/>
</dbReference>
<dbReference type="GO" id="GO:0042311">
    <property type="term" value="P:vasodilation"/>
    <property type="evidence" value="ECO:0007669"/>
    <property type="project" value="UniProtKB-KW"/>
</dbReference>
<dbReference type="InterPro" id="IPR000663">
    <property type="entry name" value="Natr_peptide"/>
</dbReference>
<dbReference type="InterPro" id="IPR030480">
    <property type="entry name" value="Natr_peptide_CS"/>
</dbReference>
<dbReference type="InterPro" id="IPR050787">
    <property type="entry name" value="Natriuretic_peptide"/>
</dbReference>
<dbReference type="InterPro" id="IPR002407">
    <property type="entry name" value="Natriuretic_peptide_atrial"/>
</dbReference>
<dbReference type="PANTHER" id="PTHR14066">
    <property type="entry name" value="ATRIAL NATRIURETIC FACTOR PRECURSOR"/>
    <property type="match status" value="1"/>
</dbReference>
<dbReference type="PANTHER" id="PTHR14066:SF2">
    <property type="entry name" value="NATRIURETIC PEPTIDES A"/>
    <property type="match status" value="1"/>
</dbReference>
<dbReference type="Pfam" id="PF00212">
    <property type="entry name" value="ANP"/>
    <property type="match status" value="1"/>
</dbReference>
<dbReference type="PRINTS" id="PR00711">
    <property type="entry name" value="ANATPEPTIDE"/>
</dbReference>
<dbReference type="PRINTS" id="PR00710">
    <property type="entry name" value="NATPEPTIDES"/>
</dbReference>
<dbReference type="SMART" id="SM00183">
    <property type="entry name" value="NAT_PEP"/>
    <property type="match status" value="1"/>
</dbReference>
<dbReference type="PROSITE" id="PS00263">
    <property type="entry name" value="NATRIURETIC_PEPTIDE"/>
    <property type="match status" value="1"/>
</dbReference>
<organism>
    <name type="scientific">Oryctolagus cuniculus</name>
    <name type="common">Rabbit</name>
    <dbReference type="NCBI Taxonomy" id="9986"/>
    <lineage>
        <taxon>Eukaryota</taxon>
        <taxon>Metazoa</taxon>
        <taxon>Chordata</taxon>
        <taxon>Craniata</taxon>
        <taxon>Vertebrata</taxon>
        <taxon>Euteleostomi</taxon>
        <taxon>Mammalia</taxon>
        <taxon>Eutheria</taxon>
        <taxon>Euarchontoglires</taxon>
        <taxon>Glires</taxon>
        <taxon>Lagomorpha</taxon>
        <taxon>Leporidae</taxon>
        <taxon>Oryctolagus</taxon>
    </lineage>
</organism>
<keyword id="KW-0966">Cell projection</keyword>
<keyword id="KW-1015">Disulfide bond</keyword>
<keyword id="KW-0372">Hormone</keyword>
<keyword id="KW-0597">Phosphoprotein</keyword>
<keyword id="KW-1185">Reference proteome</keyword>
<keyword id="KW-0964">Secreted</keyword>
<keyword id="KW-0732">Signal</keyword>
<keyword id="KW-0838">Vasoactive</keyword>
<keyword id="KW-0840">Vasodilator</keyword>
<feature type="signal peptide" evidence="4">
    <location>
        <begin position="1"/>
        <end position="25"/>
    </location>
</feature>
<feature type="chain" id="PRO_0000449757" description="Natriuretic peptides A" evidence="1">
    <location>
        <begin position="26"/>
        <end position="151"/>
    </location>
</feature>
<feature type="propeptide" id="PRO_0000001503" evidence="6">
    <location>
        <begin position="26"/>
        <end position="123"/>
    </location>
</feature>
<feature type="peptide" id="PRO_0000449758" description="Long-acting natriuretic peptide" evidence="1">
    <location>
        <begin position="26"/>
        <end position="55"/>
    </location>
</feature>
<feature type="peptide" id="PRO_0000449759" description="Vessel dilator" evidence="1">
    <location>
        <begin position="56"/>
        <end position="92"/>
    </location>
</feature>
<feature type="propeptide" id="PRO_0000449760" evidence="1">
    <location>
        <begin position="93"/>
        <end position="103"/>
    </location>
</feature>
<feature type="peptide" id="PRO_0000449761" description="Kaliuretic peptide" evidence="1">
    <location>
        <begin position="104"/>
        <end position="123"/>
    </location>
</feature>
<feature type="peptide" id="PRO_0000449762" description="Auriculin-C" evidence="2">
    <location>
        <begin position="119"/>
        <end position="151"/>
    </location>
</feature>
<feature type="peptide" id="PRO_0000449763" description="Urodilatin" evidence="1">
    <location>
        <begin position="120"/>
        <end position="151"/>
    </location>
</feature>
<feature type="peptide" id="PRO_0000449764" description="Auriculin-D" evidence="2">
    <location>
        <begin position="121"/>
        <end position="145"/>
    </location>
</feature>
<feature type="peptide" id="PRO_0000001504" description="Atrial natriuretic peptide" evidence="1">
    <location>
        <begin position="124"/>
        <end position="151"/>
    </location>
</feature>
<feature type="peptide" id="PRO_0000449765" description="Auriculin-B" evidence="2">
    <location>
        <begin position="127"/>
        <end position="151"/>
    </location>
</feature>
<feature type="peptide" id="PRO_0000449766" description="Auriculin-A" evidence="2">
    <location>
        <begin position="127"/>
        <end position="150"/>
    </location>
</feature>
<feature type="peptide" id="PRO_0000449767" description="Atriopeptin-3" evidence="2">
    <location>
        <begin position="128"/>
        <end position="151"/>
    </location>
</feature>
<feature type="peptide" id="PRO_0000449768" description="Atriopeptin-2" evidence="2">
    <location>
        <begin position="128"/>
        <end position="150"/>
    </location>
</feature>
<feature type="peptide" id="PRO_0000449769" description="Atriopeptin-1" evidence="2">
    <location>
        <begin position="128"/>
        <end position="148"/>
    </location>
</feature>
<feature type="region of interest" description="Disordered" evidence="5">
    <location>
        <begin position="54"/>
        <end position="101"/>
    </location>
</feature>
<feature type="region of interest" description="Important for degradation of atrial natriuretic peptide by IDE" evidence="1">
    <location>
        <begin position="147"/>
        <end position="151"/>
    </location>
</feature>
<feature type="site" description="Cleavage; by CORIN" evidence="1">
    <location>
        <begin position="123"/>
        <end position="124"/>
    </location>
</feature>
<feature type="site" description="Cleavage; by MME" evidence="1">
    <location>
        <begin position="130"/>
        <end position="131"/>
    </location>
</feature>
<feature type="modified residue" description="Phosphoserine" evidence="1">
    <location>
        <position position="129"/>
    </location>
</feature>
<feature type="disulfide bond" evidence="1">
    <location>
        <begin position="130"/>
        <end position="146"/>
    </location>
</feature>
<gene>
    <name type="primary">NPPA</name>
</gene>
<evidence type="ECO:0000250" key="1">
    <source>
        <dbReference type="UniProtKB" id="P01160"/>
    </source>
</evidence>
<evidence type="ECO:0000250" key="2">
    <source>
        <dbReference type="UniProtKB" id="P01161"/>
    </source>
</evidence>
<evidence type="ECO:0000250" key="3">
    <source>
        <dbReference type="UniProtKB" id="P05125"/>
    </source>
</evidence>
<evidence type="ECO:0000250" key="4">
    <source>
        <dbReference type="UniProtKB" id="P24259"/>
    </source>
</evidence>
<evidence type="ECO:0000256" key="5">
    <source>
        <dbReference type="SAM" id="MobiDB-lite"/>
    </source>
</evidence>
<evidence type="ECO:0000305" key="6"/>
<proteinExistence type="evidence at transcript level"/>
<protein>
    <recommendedName>
        <fullName evidence="6">Natriuretic peptides A</fullName>
    </recommendedName>
    <alternativeName>
        <fullName evidence="1">Atrial natriuretic factor prohormone</fullName>
        <shortName evidence="2">preproANF</shortName>
        <shortName evidence="1">proANF</shortName>
    </alternativeName>
    <alternativeName>
        <fullName evidence="1">Atrial natriuretic peptide prohormone</fullName>
        <shortName evidence="1">preproANP</shortName>
        <shortName evidence="1">proANP</shortName>
    </alternativeName>
    <alternativeName>
        <fullName evidence="2">Atriopeptigen</fullName>
    </alternativeName>
    <alternativeName>
        <fullName evidence="1">Cardiodilatin</fullName>
        <shortName evidence="1">CDD</shortName>
    </alternativeName>
    <alternativeName>
        <fullName evidence="1">preproCDD-ANF</fullName>
    </alternativeName>
    <component>
        <recommendedName>
            <fullName evidence="1">Long-acting natriuretic peptide</fullName>
            <shortName evidence="1">LANP</shortName>
        </recommendedName>
        <alternativeName>
            <fullName evidence="6">Long-acting natriuretic hormone</fullName>
            <shortName evidence="6">LANH</shortName>
        </alternativeName>
        <alternativeName>
            <fullName evidence="1">Pro atrial natriuretic factor 1-30</fullName>
            <shortName evidence="1">proANF 1-30</shortName>
        </alternativeName>
        <alternativeName>
            <fullName evidence="6">Pro atrial natriuretic peptide 1-30</fullName>
            <shortName evidence="6">proANP 1-30</shortName>
        </alternativeName>
    </component>
    <component>
        <recommendedName>
            <fullName evidence="1">Vessel dilator</fullName>
            <shortName evidence="1">VSDL</shortName>
        </recommendedName>
        <alternativeName>
            <fullName evidence="1">Pro atrial natriuretic factor 31-67</fullName>
            <shortName evidence="1">proANF 31-67</shortName>
        </alternativeName>
        <alternativeName>
            <fullName evidence="6">Pro atrial natriuretic peptide 31-67</fullName>
            <shortName evidence="6">proANP 31-67</shortName>
        </alternativeName>
    </component>
    <component>
        <recommendedName>
            <fullName evidence="1">Kaliuretic peptide</fullName>
            <shortName evidence="1">KP</shortName>
        </recommendedName>
        <alternativeName>
            <fullName evidence="1">Pro atrial natriuretic factor 79-98</fullName>
            <shortName evidence="1">proANF 79-98</shortName>
        </alternativeName>
        <alternativeName>
            <fullName evidence="6">Pro atrial natriuretic peptide 79-98</fullName>
            <shortName evidence="6">proANP 79-98</shortName>
        </alternativeName>
    </component>
    <component>
        <recommendedName>
            <fullName evidence="1">Urodilatin</fullName>
            <shortName evidence="1">URO</shortName>
        </recommendedName>
        <alternativeName>
            <fullName evidence="1">CDD 95-126</fullName>
        </alternativeName>
        <alternativeName>
            <fullName evidence="1">CDD-ANP (95-126)</fullName>
        </alternativeName>
        <alternativeName>
            <fullName evidence="1">Pro atrial natriuretic peptide 95-126</fullName>
            <shortName evidence="1">proANP 95-126</shortName>
        </alternativeName>
    </component>
    <component>
        <recommendedName>
            <fullName evidence="6">Auriculin-C</fullName>
        </recommendedName>
        <alternativeName>
            <fullName evidence="2">Atrial natriuretic factor 1-33</fullName>
            <shortName evidence="2">ANF 1-33</shortName>
        </alternativeName>
    </component>
    <component>
        <recommendedName>
            <fullName evidence="6">Auriculin-D</fullName>
        </recommendedName>
        <alternativeName>
            <fullName evidence="2">Atrial natriuretic factor 3-33</fullName>
            <shortName evidence="2">ANF 3-33</shortName>
        </alternativeName>
    </component>
    <component>
        <recommendedName>
            <fullName evidence="1">Atrial natriuretic peptide</fullName>
            <shortName evidence="1">ANP</shortName>
        </recommendedName>
        <alternativeName>
            <fullName evidence="1">Alpha-atrial natriuretic peptide</fullName>
        </alternativeName>
        <alternativeName>
            <fullName evidence="1">Alpha-hANP</fullName>
        </alternativeName>
        <alternativeName>
            <fullName evidence="1">Atrial natriuretic factor</fullName>
            <shortName evidence="1">ANF</shortName>
        </alternativeName>
        <alternativeName>
            <fullName evidence="1">CDD-ANF</fullName>
        </alternativeName>
        <alternativeName>
            <fullName evidence="1">CDD-ANP (99-126)</fullName>
        </alternativeName>
        <alternativeName>
            <fullName evidence="2">Cardionatrin</fullName>
        </alternativeName>
        <alternativeName>
            <fullName evidence="1">Pro atrial natriuretic factor 99-126</fullName>
            <shortName evidence="1">proANF 99-126</shortName>
        </alternativeName>
    </component>
    <component>
        <recommendedName>
            <fullName evidence="6">Auriculin-B</fullName>
        </recommendedName>
        <alternativeName>
            <fullName evidence="2">Atrial natriuretic factor 8-33</fullName>
            <shortName evidence="2">ANF 8-33</shortName>
        </alternativeName>
    </component>
    <component>
        <recommendedName>
            <fullName evidence="2">Auriculin-A</fullName>
        </recommendedName>
    </component>
    <component>
        <recommendedName>
            <fullName evidence="2">Atriopeptin-1</fullName>
        </recommendedName>
        <alternativeName>
            <fullName evidence="2">Atriopeptin I</fullName>
        </alternativeName>
    </component>
    <component>
        <recommendedName>
            <fullName evidence="2">Atriopeptin-2</fullName>
        </recommendedName>
        <alternativeName>
            <fullName evidence="2">Atriopeptin II</fullName>
        </alternativeName>
    </component>
    <component>
        <recommendedName>
            <fullName evidence="2">Atriopeptin-3</fullName>
        </recommendedName>
        <alternativeName>
            <fullName evidence="2">Atriopeptin III</fullName>
        </alternativeName>
    </component>
</protein>
<comment type="function">
    <molecule>Atrial natriuretic peptide</molecule>
    <text evidence="1 3">Hormone that plays a key role in mediating cardio-renal homeostasis, and is involved in vascular remodeling and regulating energy metabolism (By similarity). Acts by specifically binding and stimulating NPR1 to produce cGMP, which in turn activates effector proteins, such as PRKG1, that drive various biological responses (By similarity). Regulates vasodilation, natriuresis, diuresis and aldosterone synthesis and is therefore essential for regulating blood pressure, controlling the extracellular fluid volume and maintaining the fluid-electrolyte balance (By similarity). Also involved in inhibiting cardiac remodeling and cardiac hypertrophy by inducing cardiomyocyte apoptosis and attenuating the growth of cardiomyocytes and fibroblasts (By similarity). Plays a role in female pregnancy by promoting trophoblast invasion and spiral artery remodeling in uterus, and thus prevents pregnancy-induced hypertension (By similarity). In adipose tissue, acts in various cGMP- and PKG-dependent pathways to regulate lipid metabolism and energy homeostasis (By similarity). This includes up-regulating lipid metabolism and mitochondrial oxygen utilization by activating the AMP-activated protein kinase (AMPK), and increasing energy expenditure by acting via MAPK11 to promote the UCP1-dependent thermogenesis of brown adipose tissue (By similarity). Binds the clearance receptor NPR3 which removes the hormone from circulation (By similarity).</text>
</comment>
<comment type="function">
    <molecule>Long-acting natriuretic peptide</molecule>
    <text evidence="1 2">May have a role in cardio-renal homeostasis through regulation of natriuresis, diuresis, vasodilation, and inhibiting aldosterone synthesis. In vitro, promotes the production of cGMP and induces vasodilation. May promote natriuresis, at least in part, by enhancing prostaglandin E2 synthesis resulting in the inhibition of renal Na+-K+-ATPase (By similarity). However reports on the involvement of this peptide in mammal blood volume and blood pressure homeostasis are conflicting; according to a report, in vivo it is not sufficient to activate cGMP and does not inhibit collecting duct transport nor effect diuresis and natriuresis (By similarity). Appears to bind to specific receptors that are distinct from the receptors bound by atrial natriuretic peptide and vessel dilator. Possibly enhances protein excretion in urine by decreasing proximal tubular protein reabsorption (By similarity).</text>
</comment>
<comment type="function">
    <molecule>Vessel dilator</molecule>
    <text evidence="1">May have a role in cardio-renal homeostasis through regulation of natriuresis, diuresis, and vasodilation. In vitro, promotes the production of cGMP and induces vasodilation. May promote natriuresis, at least in part, by enhancing prostaglandin E2 synthesis resulting in the inhibition of renal Na+-K+-ATPase. However reports on the involvement of this peptide in mammal blood volume and blood pressure homeostasis are conflicting; according to a report it is not sufficient to activate cGMP and does not inhibit collecting duct transport nor effect diuresis and natriuresis. Appears to bind to specific receptors that are distinct from the receptors bound by the atrial natriuretic and long-acting natriuretic peptides. Possibly functions in protein excretion in urine by maintaining the integrity of the proximal tubules and enhancing protein excretion by decreasing proximal tubular protein reabsorption.</text>
</comment>
<comment type="function">
    <molecule>Kaliuretic peptide</molecule>
    <text evidence="1">May have a role in cardio-renal homeostasis through regulation of diuresis and inhibiting aldosterone synthesis. In vitro, promotes the production of cGMP and induces vasodilation. May promote natriuresis, at least in part, by enhancing prostaglandin E2 synthesis resulting in the inhibition of renal Na+-K+-ATPase. May have a role in potassium excretion but not sodium excretion (natriuresis). Possibly enhances protein excretion in urine by decreasing proximal tubular protein reabsorption.</text>
</comment>
<comment type="function">
    <molecule>Urodilatin</molecule>
    <text evidence="1">Hormone produced in the kidneys that appears to be important for maintaining cardio-renal homeostasis. Mediates vasodilation, natriuresis and diuresis primarily in the renal system, in order to maintain the extracellular fluid volume and control the fluid-electrolyte balance. Specifically binds and stimulates cGMP production by renal transmembrane receptors, likely NPR1. Urodilatin not ANP, may be the natriuretic peptide responsible for the regulation of sodium and water homeostasis in the kidney.</text>
</comment>
<comment type="function">
    <molecule>Auriculin-D</molecule>
    <text evidence="2">May have a role in cardio-renal homeostasis through regulation of natriuresis and vasodilation. In vivo promotes natriuresis and in vitro, vasodilates renal artery strips.</text>
</comment>
<comment type="function">
    <molecule>Auriculin-B</molecule>
    <text evidence="2">May have a role in cardio-renal homeostasis through regulation of natriuresis and vasodilation. In vivo promotes natriuresis and in vitro, vasodilates renal artery strips.</text>
</comment>
<comment type="function">
    <molecule>Auriculin-A</molecule>
    <text evidence="2">May have a role in cardio-renal homeostasis through regulation of regulation of natriuresis and vasodilation. In vivo promotes natriuresis. In vitro, vasodilates intestinal smooth muscle but not smooth muscle strips.</text>
</comment>
<comment type="function">
    <molecule>Atriopeptin-2</molecule>
    <text evidence="2">May have a role in cardio-renal homeostasis through regulation of natriuresis and vasodilation. In vivo promotes natriuresis. In vitro, selectively vasodilates intestinal and vascular smooth muscle strips.</text>
</comment>
<comment type="function">
    <molecule>Atriopeptin-1</molecule>
    <text evidence="2">May have a role in cardio-renal homeostasis through regulation of natriuresis and vasodilation. In vivo promotes natriuresis. In vitro, selectively vasodilates intestinal smooth muscle but not vascular smooth muscle strips.</text>
</comment>
<comment type="subunit">
    <molecule>Atrial natriuretic peptide</molecule>
    <text evidence="1">Homodimer; disulfide-linked antiparallel dimer.</text>
</comment>
<comment type="subcellular location">
    <molecule>Long-acting natriuretic peptide</molecule>
    <subcellularLocation>
        <location evidence="1">Secreted</location>
    </subcellularLocation>
    <text evidence="1">Detected in blood.</text>
</comment>
<comment type="subcellular location">
    <molecule>Vessel dilator</molecule>
    <subcellularLocation>
        <location evidence="1">Secreted</location>
    </subcellularLocation>
    <text evidence="1">Detected in blood.</text>
</comment>
<comment type="subcellular location">
    <molecule>Kaliuretic peptide</molecule>
    <subcellularLocation>
        <location evidence="1">Secreted</location>
    </subcellularLocation>
    <text evidence="1">Detected in blood.</text>
</comment>
<comment type="subcellular location">
    <molecule>Urodilatin</molecule>
    <subcellularLocation>
        <location evidence="1">Secreted</location>
    </subcellularLocation>
    <text evidence="1">Detected in urine. Not detected in blood. Increased electrolytes, osmolality and intracellular cAMP levels increase peptide secretion/excretion.</text>
</comment>
<comment type="subcellular location">
    <molecule>Atrial natriuretic peptide</molecule>
    <subcellularLocation>
        <location evidence="1">Secreted</location>
    </subcellularLocation>
    <subcellularLocation>
        <location evidence="1">Perikaryon</location>
    </subcellularLocation>
    <subcellularLocation>
        <location evidence="1">Cell projection</location>
    </subcellularLocation>
    <text evidence="1 2">Detected in blood. Detected in urine in one study. However, in another study, was not detected in urine. Detected in cytoplasmic bodies and neuronal processes of pyramidal neurons (layers II-VI) (By similarity). Increased secretion in response to the vasopressin AVP (By similarity). Likely to be secreted in response to an increase in atrial pressure or atrial stretch. In kidney cells, secretion increases in response to activated guanylyl cyclases and increased intracellular cAMP levels. Plasma levels increase 15 minutes after a high-salt meal, and decrease back to normal plasma levels 1 hr later (By similarity).</text>
</comment>
<comment type="subcellular location">
    <molecule>Atriopeptin-3</molecule>
    <subcellularLocation>
        <location evidence="2">Secreted</location>
    </subcellularLocation>
    <text evidence="2">Detected in blood. Slight increase in secretion in response to the vasopressin AVP.</text>
</comment>
<comment type="PTM">
    <text evidence="1 2">The precursor molecule is proteolytically cleaved by CORIN at Arg-123 to produce the atrial natriuretic peptide (By similarity). Undergoes further proteolytic cleavage by unknown proteases to give rise to long-acting natriuretic peptide, vessel dilator and kaliuretic peptide (By similarity). Additional processing gives rise to the auriculin and atriopeptin peptides (By similarity). In the kidneys, alternative processing by an unknown protease results in the peptide urodilatin (By similarity).</text>
</comment>
<comment type="PTM">
    <molecule>Atrial natriuretic peptide</molecule>
    <text evidence="1">Cleavage by MME initiates degradation of the factor and thereby regulates its activity. Degradation by IDE results in reduced activation of NPR1 (in vitro). During IDE degradation, the resulting products can temporarily stimulate NPR2 to produce cGMP, before the fragments are completely degraded and inactivated by IDE (in vitro).</text>
</comment>
<comment type="PTM">
    <molecule>Urodilatin</molecule>
    <text evidence="1">Degraded by IDE.</text>
</comment>
<comment type="PTM">
    <molecule>Urodilatin</molecule>
    <text evidence="1">Phosphorylation on Ser-129 decreases vasorelaxant activity.</text>
</comment>
<comment type="similarity">
    <text evidence="6">Belongs to the natriuretic peptide family.</text>
</comment>
<comment type="caution">
    <molecule>Long-acting natriuretic peptide</molecule>
    <text evidence="1 2">Results concerning the involvement of this peptide in blood volume and blood pressure homeostasis are conflicting. Several studies utilising in vitro and heterologous expression systems show that it is able to activate cGMP and promote vasodilation and natriuresis (By similarity). However, an in vivo study in rat found that it is not sufficient to induce any diuretic, natriuretic, nor hypotensive responses, and is unable to bind NPR1 nor increase guanylyl cyclase activity (By similarity).</text>
</comment>
<comment type="caution">
    <molecule>Vessel dilator</molecule>
    <text evidence="1 2">Results concerning the involvement of this peptide in blood volume and blood pressure homeostasis are conflicting. Several studies utilising in vitro and heterologous expression systems show that it is able to activate cGMP and promote vasodilation and natriuresis (By similarity). However, a heterologous and in vivo expression study in rat found that it is not sufficient to induce any diuretic, natriuretic, nor hypotensive responses, and is unable to bind NPR1 nor increase guanylyl cyclase activity (By similarity).</text>
</comment>
<reference key="1">
    <citation type="journal article" date="1985" name="Biochem. Biophys. Res. Commun.">
        <title>Structure of dog and rabbit precursors of atrial natriuretic polypeptides deduced from nucleotide sequence of cloned cDNA.</title>
        <authorList>
            <person name="Oikawa S."/>
            <person name="Imai M."/>
            <person name="Inuzuka C."/>
            <person name="Tawaragi Y."/>
            <person name="Nakazato H."/>
            <person name="Matsuo H."/>
        </authorList>
    </citation>
    <scope>NUCLEOTIDE SEQUENCE [MRNA]</scope>
</reference>
<accession>P07500</accession>